<feature type="chain" id="PRO_0000332336" description="Cobyric acid synthase">
    <location>
        <begin position="1"/>
        <end position="506"/>
    </location>
</feature>
<feature type="domain" description="GATase cobBQ-type" evidence="1">
    <location>
        <begin position="254"/>
        <end position="453"/>
    </location>
</feature>
<feature type="active site" description="Nucleophile" evidence="1">
    <location>
        <position position="334"/>
    </location>
</feature>
<feature type="active site" evidence="1">
    <location>
        <position position="445"/>
    </location>
</feature>
<gene>
    <name evidence="1" type="primary">cobQ</name>
    <name type="ordered locus">DET0936</name>
</gene>
<accession>Q3Z7Y8</accession>
<protein>
    <recommendedName>
        <fullName evidence="1">Cobyric acid synthase</fullName>
    </recommendedName>
</protein>
<name>COBQ_DEHM1</name>
<sequence length="506" mass="55255">MNAMAKLIMVQGTSSNVGKSILVTALCRIFKQDGYKVAPFKSQNMALNAFVTQEGGEIGRAQAVQAEACGIAPSVDMNPILMKPEADSKSQIVVNGKVDRTISAREYYEYAPLLLDTALAALNRLREQNDIVVIEGAGSPAEINLRQREIVNMRIAKTAGAPVLLAGDIDRGGVFASLIGTIDLLEPEERSYVKGYLINKFRGDASLLKPAIDVLEDRTSIPVLGIIPYLRNMAIAQEDSVYLDECKSGLGETDLDIAVIRLPRISNYDDFDALATDGASVRFVSKTGEIGNPDLIIIPGTKSTIPDMEYLWQNGLAETIIKKAGKGTHVLGVCGGYQILGKMIYDPHKTESETTELKGLGLLDTETTFEKEKSTTQVSGQVRFNNGLLADMAGCEVGGYEIHMGRTRLFTAQPAFQITKTPKGPADYLDGASNAEGTVLGTYIHGIFESDSFRRGFLNAIRRYKGIPERQAGYFDRDKEYDKLADIVRASIDMNKIYDILNEGIR</sequence>
<comment type="function">
    <text evidence="1">Catalyzes amidations at positions B, D, E, and G on adenosylcobyrinic A,C-diamide. NH(2) groups are provided by glutamine, and one molecule of ATP is hydrogenolyzed for each amidation.</text>
</comment>
<comment type="pathway">
    <text evidence="1">Cofactor biosynthesis; adenosylcobalamin biosynthesis.</text>
</comment>
<comment type="similarity">
    <text evidence="1">Belongs to the CobB/CobQ family. CobQ subfamily.</text>
</comment>
<reference key="1">
    <citation type="journal article" date="2005" name="Science">
        <title>Genome sequence of the PCE-dechlorinating bacterium Dehalococcoides ethenogenes.</title>
        <authorList>
            <person name="Seshadri R."/>
            <person name="Adrian L."/>
            <person name="Fouts D.E."/>
            <person name="Eisen J.A."/>
            <person name="Phillippy A.M."/>
            <person name="Methe B.A."/>
            <person name="Ward N.L."/>
            <person name="Nelson W.C."/>
            <person name="DeBoy R.T."/>
            <person name="Khouri H.M."/>
            <person name="Kolonay J.F."/>
            <person name="Dodson R.J."/>
            <person name="Daugherty S.C."/>
            <person name="Brinkac L.M."/>
            <person name="Sullivan S.A."/>
            <person name="Madupu R."/>
            <person name="Nelson K.E."/>
            <person name="Kang K.H."/>
            <person name="Impraim M."/>
            <person name="Tran K."/>
            <person name="Robinson J.M."/>
            <person name="Forberger H.A."/>
            <person name="Fraser C.M."/>
            <person name="Zinder S.H."/>
            <person name="Heidelberg J.F."/>
        </authorList>
    </citation>
    <scope>NUCLEOTIDE SEQUENCE [LARGE SCALE GENOMIC DNA]</scope>
    <source>
        <strain>ATCC BAA-2266 / KCTC 15142 / 195</strain>
    </source>
</reference>
<dbReference type="EMBL" id="CP000027">
    <property type="protein sequence ID" value="AAW39791.1"/>
    <property type="molecule type" value="Genomic_DNA"/>
</dbReference>
<dbReference type="SMR" id="Q3Z7Y8"/>
<dbReference type="STRING" id="243164.DET0936"/>
<dbReference type="KEGG" id="det:DET0936"/>
<dbReference type="eggNOG" id="COG1492">
    <property type="taxonomic scope" value="Bacteria"/>
</dbReference>
<dbReference type="HOGENOM" id="CLU_019250_2_2_0"/>
<dbReference type="InParanoid" id="Q3Z7Y8"/>
<dbReference type="UniPathway" id="UPA00148"/>
<dbReference type="Proteomes" id="UP000008289">
    <property type="component" value="Chromosome"/>
</dbReference>
<dbReference type="GO" id="GO:0015420">
    <property type="term" value="F:ABC-type vitamin B12 transporter activity"/>
    <property type="evidence" value="ECO:0007669"/>
    <property type="project" value="UniProtKB-UniRule"/>
</dbReference>
<dbReference type="GO" id="GO:0003824">
    <property type="term" value="F:catalytic activity"/>
    <property type="evidence" value="ECO:0007669"/>
    <property type="project" value="InterPro"/>
</dbReference>
<dbReference type="GO" id="GO:0009236">
    <property type="term" value="P:cobalamin biosynthetic process"/>
    <property type="evidence" value="ECO:0007669"/>
    <property type="project" value="UniProtKB-UniRule"/>
</dbReference>
<dbReference type="CDD" id="cd05389">
    <property type="entry name" value="CobQ_N"/>
    <property type="match status" value="1"/>
</dbReference>
<dbReference type="CDD" id="cd01750">
    <property type="entry name" value="GATase1_CobQ"/>
    <property type="match status" value="1"/>
</dbReference>
<dbReference type="Gene3D" id="3.40.50.880">
    <property type="match status" value="1"/>
</dbReference>
<dbReference type="Gene3D" id="3.40.50.300">
    <property type="entry name" value="P-loop containing nucleotide triphosphate hydrolases"/>
    <property type="match status" value="1"/>
</dbReference>
<dbReference type="HAMAP" id="MF_00028">
    <property type="entry name" value="CobQ"/>
    <property type="match status" value="1"/>
</dbReference>
<dbReference type="InterPro" id="IPR029062">
    <property type="entry name" value="Class_I_gatase-like"/>
</dbReference>
<dbReference type="InterPro" id="IPR002586">
    <property type="entry name" value="CobQ/CobB/MinD/ParA_Nub-bd_dom"/>
</dbReference>
<dbReference type="InterPro" id="IPR033949">
    <property type="entry name" value="CobQ_GATase1"/>
</dbReference>
<dbReference type="InterPro" id="IPR047045">
    <property type="entry name" value="CobQ_N"/>
</dbReference>
<dbReference type="InterPro" id="IPR004459">
    <property type="entry name" value="CobQ_synth"/>
</dbReference>
<dbReference type="InterPro" id="IPR011698">
    <property type="entry name" value="GATase_3"/>
</dbReference>
<dbReference type="InterPro" id="IPR027417">
    <property type="entry name" value="P-loop_NTPase"/>
</dbReference>
<dbReference type="NCBIfam" id="TIGR00313">
    <property type="entry name" value="cobQ"/>
    <property type="match status" value="1"/>
</dbReference>
<dbReference type="NCBIfam" id="NF001989">
    <property type="entry name" value="PRK00784.1"/>
    <property type="match status" value="1"/>
</dbReference>
<dbReference type="PANTHER" id="PTHR21343:SF1">
    <property type="entry name" value="COBYRIC ACID SYNTHASE"/>
    <property type="match status" value="1"/>
</dbReference>
<dbReference type="PANTHER" id="PTHR21343">
    <property type="entry name" value="DETHIOBIOTIN SYNTHETASE"/>
    <property type="match status" value="1"/>
</dbReference>
<dbReference type="Pfam" id="PF01656">
    <property type="entry name" value="CbiA"/>
    <property type="match status" value="1"/>
</dbReference>
<dbReference type="Pfam" id="PF07685">
    <property type="entry name" value="GATase_3"/>
    <property type="match status" value="1"/>
</dbReference>
<dbReference type="SUPFAM" id="SSF52317">
    <property type="entry name" value="Class I glutamine amidotransferase-like"/>
    <property type="match status" value="1"/>
</dbReference>
<dbReference type="SUPFAM" id="SSF52540">
    <property type="entry name" value="P-loop containing nucleoside triphosphate hydrolases"/>
    <property type="match status" value="1"/>
</dbReference>
<dbReference type="PROSITE" id="PS51274">
    <property type="entry name" value="GATASE_COBBQ"/>
    <property type="match status" value="1"/>
</dbReference>
<proteinExistence type="inferred from homology"/>
<evidence type="ECO:0000255" key="1">
    <source>
        <dbReference type="HAMAP-Rule" id="MF_00028"/>
    </source>
</evidence>
<organism>
    <name type="scientific">Dehalococcoides mccartyi (strain ATCC BAA-2266 / KCTC 15142 / 195)</name>
    <name type="common">Dehalococcoides ethenogenes (strain 195)</name>
    <dbReference type="NCBI Taxonomy" id="243164"/>
    <lineage>
        <taxon>Bacteria</taxon>
        <taxon>Bacillati</taxon>
        <taxon>Chloroflexota</taxon>
        <taxon>Dehalococcoidia</taxon>
        <taxon>Dehalococcoidales</taxon>
        <taxon>Dehalococcoidaceae</taxon>
        <taxon>Dehalococcoides</taxon>
    </lineage>
</organism>
<keyword id="KW-0169">Cobalamin biosynthesis</keyword>
<keyword id="KW-0315">Glutamine amidotransferase</keyword>